<gene>
    <name evidence="1" type="primary">mscL</name>
    <name type="ordered locus">Ent638_3722</name>
</gene>
<comment type="function">
    <text evidence="1">Channel that opens in response to stretch forces in the membrane lipid bilayer. May participate in the regulation of osmotic pressure changes within the cell.</text>
</comment>
<comment type="subunit">
    <text evidence="1">Homopentamer.</text>
</comment>
<comment type="subcellular location">
    <subcellularLocation>
        <location evidence="1">Cell inner membrane</location>
        <topology evidence="1">Multi-pass membrane protein</topology>
    </subcellularLocation>
</comment>
<comment type="similarity">
    <text evidence="1">Belongs to the MscL family.</text>
</comment>
<protein>
    <recommendedName>
        <fullName evidence="1">Large-conductance mechanosensitive channel</fullName>
    </recommendedName>
</protein>
<sequence length="137" mass="15093">MSIVKEFREFAMRGNVVDLAVGVIIGAAFGKIVSSLVADIIMPPLGLLIGGIDFKQFAVTLRDAQGDIPAVVMHYGVFIQNVFDFVIVAFAIFMAIKLINRLNRKKEEPAAVPPAPSKEEVLLTQIRDLLKEQNNRI</sequence>
<name>MSCL_ENT38</name>
<dbReference type="EMBL" id="CP000653">
    <property type="protein sequence ID" value="ABP62379.1"/>
    <property type="molecule type" value="Genomic_DNA"/>
</dbReference>
<dbReference type="RefSeq" id="WP_015960700.1">
    <property type="nucleotide sequence ID" value="NC_009436.1"/>
</dbReference>
<dbReference type="SMR" id="A4WF99"/>
<dbReference type="STRING" id="399742.Ent638_3722"/>
<dbReference type="GeneID" id="93306697"/>
<dbReference type="KEGG" id="ent:Ent638_3722"/>
<dbReference type="eggNOG" id="COG1970">
    <property type="taxonomic scope" value="Bacteria"/>
</dbReference>
<dbReference type="HOGENOM" id="CLU_095787_0_0_6"/>
<dbReference type="OrthoDB" id="9810350at2"/>
<dbReference type="Proteomes" id="UP000000230">
    <property type="component" value="Chromosome"/>
</dbReference>
<dbReference type="GO" id="GO:0005886">
    <property type="term" value="C:plasma membrane"/>
    <property type="evidence" value="ECO:0007669"/>
    <property type="project" value="UniProtKB-SubCell"/>
</dbReference>
<dbReference type="GO" id="GO:0008381">
    <property type="term" value="F:mechanosensitive monoatomic ion channel activity"/>
    <property type="evidence" value="ECO:0007669"/>
    <property type="project" value="UniProtKB-UniRule"/>
</dbReference>
<dbReference type="FunFam" id="1.10.1200.120:FF:000001">
    <property type="entry name" value="Large-conductance mechanosensitive channel"/>
    <property type="match status" value="1"/>
</dbReference>
<dbReference type="Gene3D" id="1.10.1200.120">
    <property type="entry name" value="Large-conductance mechanosensitive channel, MscL, domain 1"/>
    <property type="match status" value="1"/>
</dbReference>
<dbReference type="HAMAP" id="MF_00115">
    <property type="entry name" value="MscL"/>
    <property type="match status" value="1"/>
</dbReference>
<dbReference type="InterPro" id="IPR019823">
    <property type="entry name" value="Mechanosensitive_channel_CS"/>
</dbReference>
<dbReference type="InterPro" id="IPR001185">
    <property type="entry name" value="MS_channel"/>
</dbReference>
<dbReference type="InterPro" id="IPR037673">
    <property type="entry name" value="MSC/AndL"/>
</dbReference>
<dbReference type="InterPro" id="IPR036019">
    <property type="entry name" value="MscL_channel"/>
</dbReference>
<dbReference type="NCBIfam" id="TIGR00220">
    <property type="entry name" value="mscL"/>
    <property type="match status" value="1"/>
</dbReference>
<dbReference type="NCBIfam" id="NF001841">
    <property type="entry name" value="PRK00567.1-1"/>
    <property type="match status" value="1"/>
</dbReference>
<dbReference type="NCBIfam" id="NF001843">
    <property type="entry name" value="PRK00567.1-4"/>
    <property type="match status" value="1"/>
</dbReference>
<dbReference type="PANTHER" id="PTHR30266:SF2">
    <property type="entry name" value="LARGE-CONDUCTANCE MECHANOSENSITIVE CHANNEL"/>
    <property type="match status" value="1"/>
</dbReference>
<dbReference type="PANTHER" id="PTHR30266">
    <property type="entry name" value="MECHANOSENSITIVE CHANNEL MSCL"/>
    <property type="match status" value="1"/>
</dbReference>
<dbReference type="Pfam" id="PF01741">
    <property type="entry name" value="MscL"/>
    <property type="match status" value="1"/>
</dbReference>
<dbReference type="PRINTS" id="PR01264">
    <property type="entry name" value="MECHCHANNEL"/>
</dbReference>
<dbReference type="SUPFAM" id="SSF81330">
    <property type="entry name" value="Gated mechanosensitive channel"/>
    <property type="match status" value="1"/>
</dbReference>
<dbReference type="PROSITE" id="PS01327">
    <property type="entry name" value="MSCL"/>
    <property type="match status" value="1"/>
</dbReference>
<organism>
    <name type="scientific">Enterobacter sp. (strain 638)</name>
    <dbReference type="NCBI Taxonomy" id="399742"/>
    <lineage>
        <taxon>Bacteria</taxon>
        <taxon>Pseudomonadati</taxon>
        <taxon>Pseudomonadota</taxon>
        <taxon>Gammaproteobacteria</taxon>
        <taxon>Enterobacterales</taxon>
        <taxon>Enterobacteriaceae</taxon>
        <taxon>Enterobacter</taxon>
    </lineage>
</organism>
<reference key="1">
    <citation type="journal article" date="2010" name="PLoS Genet.">
        <title>Genome sequence of the plant growth promoting endophytic bacterium Enterobacter sp. 638.</title>
        <authorList>
            <person name="Taghavi S."/>
            <person name="van der Lelie D."/>
            <person name="Hoffman A."/>
            <person name="Zhang Y.B."/>
            <person name="Walla M.D."/>
            <person name="Vangronsveld J."/>
            <person name="Newman L."/>
            <person name="Monchy S."/>
        </authorList>
    </citation>
    <scope>NUCLEOTIDE SEQUENCE [LARGE SCALE GENOMIC DNA]</scope>
    <source>
        <strain>638</strain>
    </source>
</reference>
<feature type="chain" id="PRO_1000057756" description="Large-conductance mechanosensitive channel">
    <location>
        <begin position="1"/>
        <end position="137"/>
    </location>
</feature>
<feature type="transmembrane region" description="Helical" evidence="1">
    <location>
        <begin position="10"/>
        <end position="30"/>
    </location>
</feature>
<feature type="transmembrane region" description="Helical" evidence="1">
    <location>
        <begin position="76"/>
        <end position="96"/>
    </location>
</feature>
<accession>A4WF99</accession>
<proteinExistence type="inferred from homology"/>
<evidence type="ECO:0000255" key="1">
    <source>
        <dbReference type="HAMAP-Rule" id="MF_00115"/>
    </source>
</evidence>
<keyword id="KW-0997">Cell inner membrane</keyword>
<keyword id="KW-1003">Cell membrane</keyword>
<keyword id="KW-0407">Ion channel</keyword>
<keyword id="KW-0406">Ion transport</keyword>
<keyword id="KW-0472">Membrane</keyword>
<keyword id="KW-0812">Transmembrane</keyword>
<keyword id="KW-1133">Transmembrane helix</keyword>
<keyword id="KW-0813">Transport</keyword>